<name>RS10_LACDB</name>
<accession>Q04C16</accession>
<gene>
    <name evidence="1" type="primary">rpsJ</name>
    <name type="ordered locus">LBUL_0349</name>
</gene>
<organism>
    <name type="scientific">Lactobacillus delbrueckii subsp. bulgaricus (strain ATCC BAA-365 / Lb-18)</name>
    <dbReference type="NCBI Taxonomy" id="321956"/>
    <lineage>
        <taxon>Bacteria</taxon>
        <taxon>Bacillati</taxon>
        <taxon>Bacillota</taxon>
        <taxon>Bacilli</taxon>
        <taxon>Lactobacillales</taxon>
        <taxon>Lactobacillaceae</taxon>
        <taxon>Lactobacillus</taxon>
    </lineage>
</organism>
<reference key="1">
    <citation type="journal article" date="2006" name="Proc. Natl. Acad. Sci. U.S.A.">
        <title>Comparative genomics of the lactic acid bacteria.</title>
        <authorList>
            <person name="Makarova K.S."/>
            <person name="Slesarev A."/>
            <person name="Wolf Y.I."/>
            <person name="Sorokin A."/>
            <person name="Mirkin B."/>
            <person name="Koonin E.V."/>
            <person name="Pavlov A."/>
            <person name="Pavlova N."/>
            <person name="Karamychev V."/>
            <person name="Polouchine N."/>
            <person name="Shakhova V."/>
            <person name="Grigoriev I."/>
            <person name="Lou Y."/>
            <person name="Rohksar D."/>
            <person name="Lucas S."/>
            <person name="Huang K."/>
            <person name="Goodstein D.M."/>
            <person name="Hawkins T."/>
            <person name="Plengvidhya V."/>
            <person name="Welker D."/>
            <person name="Hughes J."/>
            <person name="Goh Y."/>
            <person name="Benson A."/>
            <person name="Baldwin K."/>
            <person name="Lee J.-H."/>
            <person name="Diaz-Muniz I."/>
            <person name="Dosti B."/>
            <person name="Smeianov V."/>
            <person name="Wechter W."/>
            <person name="Barabote R."/>
            <person name="Lorca G."/>
            <person name="Altermann E."/>
            <person name="Barrangou R."/>
            <person name="Ganesan B."/>
            <person name="Xie Y."/>
            <person name="Rawsthorne H."/>
            <person name="Tamir D."/>
            <person name="Parker C."/>
            <person name="Breidt F."/>
            <person name="Broadbent J.R."/>
            <person name="Hutkins R."/>
            <person name="O'Sullivan D."/>
            <person name="Steele J."/>
            <person name="Unlu G."/>
            <person name="Saier M.H. Jr."/>
            <person name="Klaenhammer T."/>
            <person name="Richardson P."/>
            <person name="Kozyavkin S."/>
            <person name="Weimer B.C."/>
            <person name="Mills D.A."/>
        </authorList>
    </citation>
    <scope>NUCLEOTIDE SEQUENCE [LARGE SCALE GENOMIC DNA]</scope>
    <source>
        <strain>ATCC BAA-365 / Lb-18</strain>
    </source>
</reference>
<dbReference type="EMBL" id="CP000412">
    <property type="protein sequence ID" value="ABJ58006.1"/>
    <property type="molecule type" value="Genomic_DNA"/>
</dbReference>
<dbReference type="RefSeq" id="WP_003622468.1">
    <property type="nucleotide sequence ID" value="NC_008529.1"/>
</dbReference>
<dbReference type="SMR" id="Q04C16"/>
<dbReference type="KEGG" id="lbu:LBUL_0349"/>
<dbReference type="HOGENOM" id="CLU_122625_1_3_9"/>
<dbReference type="BioCyc" id="LDEL321956:LBUL_RS01630-MONOMER"/>
<dbReference type="GO" id="GO:1990904">
    <property type="term" value="C:ribonucleoprotein complex"/>
    <property type="evidence" value="ECO:0007669"/>
    <property type="project" value="UniProtKB-KW"/>
</dbReference>
<dbReference type="GO" id="GO:0005840">
    <property type="term" value="C:ribosome"/>
    <property type="evidence" value="ECO:0007669"/>
    <property type="project" value="UniProtKB-KW"/>
</dbReference>
<dbReference type="GO" id="GO:0003735">
    <property type="term" value="F:structural constituent of ribosome"/>
    <property type="evidence" value="ECO:0007669"/>
    <property type="project" value="InterPro"/>
</dbReference>
<dbReference type="GO" id="GO:0000049">
    <property type="term" value="F:tRNA binding"/>
    <property type="evidence" value="ECO:0007669"/>
    <property type="project" value="UniProtKB-UniRule"/>
</dbReference>
<dbReference type="GO" id="GO:0006412">
    <property type="term" value="P:translation"/>
    <property type="evidence" value="ECO:0007669"/>
    <property type="project" value="UniProtKB-UniRule"/>
</dbReference>
<dbReference type="FunFam" id="3.30.70.600:FF:000001">
    <property type="entry name" value="30S ribosomal protein S10"/>
    <property type="match status" value="1"/>
</dbReference>
<dbReference type="Gene3D" id="3.30.70.600">
    <property type="entry name" value="Ribosomal protein S10 domain"/>
    <property type="match status" value="1"/>
</dbReference>
<dbReference type="HAMAP" id="MF_00508">
    <property type="entry name" value="Ribosomal_uS10"/>
    <property type="match status" value="1"/>
</dbReference>
<dbReference type="InterPro" id="IPR001848">
    <property type="entry name" value="Ribosomal_uS10"/>
</dbReference>
<dbReference type="InterPro" id="IPR018268">
    <property type="entry name" value="Ribosomal_uS10_CS"/>
</dbReference>
<dbReference type="InterPro" id="IPR027486">
    <property type="entry name" value="Ribosomal_uS10_dom"/>
</dbReference>
<dbReference type="InterPro" id="IPR036838">
    <property type="entry name" value="Ribosomal_uS10_dom_sf"/>
</dbReference>
<dbReference type="NCBIfam" id="NF001861">
    <property type="entry name" value="PRK00596.1"/>
    <property type="match status" value="1"/>
</dbReference>
<dbReference type="NCBIfam" id="TIGR01049">
    <property type="entry name" value="rpsJ_bact"/>
    <property type="match status" value="1"/>
</dbReference>
<dbReference type="PANTHER" id="PTHR11700">
    <property type="entry name" value="30S RIBOSOMAL PROTEIN S10 FAMILY MEMBER"/>
    <property type="match status" value="1"/>
</dbReference>
<dbReference type="Pfam" id="PF00338">
    <property type="entry name" value="Ribosomal_S10"/>
    <property type="match status" value="1"/>
</dbReference>
<dbReference type="PRINTS" id="PR00971">
    <property type="entry name" value="RIBOSOMALS10"/>
</dbReference>
<dbReference type="SMART" id="SM01403">
    <property type="entry name" value="Ribosomal_S10"/>
    <property type="match status" value="1"/>
</dbReference>
<dbReference type="SUPFAM" id="SSF54999">
    <property type="entry name" value="Ribosomal protein S10"/>
    <property type="match status" value="1"/>
</dbReference>
<dbReference type="PROSITE" id="PS00361">
    <property type="entry name" value="RIBOSOMAL_S10"/>
    <property type="match status" value="1"/>
</dbReference>
<evidence type="ECO:0000255" key="1">
    <source>
        <dbReference type="HAMAP-Rule" id="MF_00508"/>
    </source>
</evidence>
<evidence type="ECO:0000305" key="2"/>
<sequence length="102" mass="11577">MANEKIRIRLKSYEHSILDESGAKIVDTAKRTGAEISGPVPLPTERTLFTVLRSPHKNKDSREQFEMRTHKRLIDILNPTPKTVDSLMKLDLPSGVDIEIKL</sequence>
<feature type="chain" id="PRO_1000015039" description="Small ribosomal subunit protein uS10">
    <location>
        <begin position="1"/>
        <end position="102"/>
    </location>
</feature>
<proteinExistence type="inferred from homology"/>
<keyword id="KW-0687">Ribonucleoprotein</keyword>
<keyword id="KW-0689">Ribosomal protein</keyword>
<comment type="function">
    <text evidence="1">Involved in the binding of tRNA to the ribosomes.</text>
</comment>
<comment type="subunit">
    <text evidence="1">Part of the 30S ribosomal subunit.</text>
</comment>
<comment type="similarity">
    <text evidence="1">Belongs to the universal ribosomal protein uS10 family.</text>
</comment>
<protein>
    <recommendedName>
        <fullName evidence="1">Small ribosomal subunit protein uS10</fullName>
    </recommendedName>
    <alternativeName>
        <fullName evidence="2">30S ribosomal protein S10</fullName>
    </alternativeName>
</protein>